<accession>C7P544</accession>
<organism>
    <name type="scientific">Halomicrobium mukohataei (strain ATCC 700874 / DSM 12286 / JCM 9738 / NCIMB 13541)</name>
    <name type="common">Haloarcula mukohataei</name>
    <dbReference type="NCBI Taxonomy" id="485914"/>
    <lineage>
        <taxon>Archaea</taxon>
        <taxon>Methanobacteriati</taxon>
        <taxon>Methanobacteriota</taxon>
        <taxon>Stenosarchaea group</taxon>
        <taxon>Halobacteria</taxon>
        <taxon>Halobacteriales</taxon>
        <taxon>Haloarculaceae</taxon>
        <taxon>Halomicrobium</taxon>
    </lineage>
</organism>
<dbReference type="EMBL" id="CP001689">
    <property type="protein sequence ID" value="ACV49439.1"/>
    <property type="molecule type" value="Genomic_DNA"/>
</dbReference>
<dbReference type="RefSeq" id="WP_012807516.1">
    <property type="nucleotide sequence ID" value="NC_013201.1"/>
</dbReference>
<dbReference type="SMR" id="C7P544"/>
<dbReference type="GeneID" id="8409429"/>
<dbReference type="KEGG" id="hmu:Hmuk_3351"/>
<dbReference type="eggNOG" id="arCOG08098">
    <property type="taxonomic scope" value="Archaea"/>
</dbReference>
<dbReference type="HOGENOM" id="CLU_108412_0_0_2"/>
<dbReference type="OrthoDB" id="212442at2157"/>
<dbReference type="Proteomes" id="UP000001746">
    <property type="component" value="Plasmid pHmuk01"/>
</dbReference>
<dbReference type="GO" id="GO:0005524">
    <property type="term" value="F:ATP binding"/>
    <property type="evidence" value="ECO:0007669"/>
    <property type="project" value="UniProtKB-KW"/>
</dbReference>
<dbReference type="GO" id="GO:0003677">
    <property type="term" value="F:DNA binding"/>
    <property type="evidence" value="ECO:0007669"/>
    <property type="project" value="UniProtKB-KW"/>
</dbReference>
<dbReference type="GO" id="GO:0008270">
    <property type="term" value="F:zinc ion binding"/>
    <property type="evidence" value="ECO:0007669"/>
    <property type="project" value="UniProtKB-UniRule"/>
</dbReference>
<dbReference type="GO" id="GO:0045892">
    <property type="term" value="P:negative regulation of DNA-templated transcription"/>
    <property type="evidence" value="ECO:0007669"/>
    <property type="project" value="UniProtKB-UniRule"/>
</dbReference>
<dbReference type="HAMAP" id="MF_00440">
    <property type="entry name" value="NrdR"/>
    <property type="match status" value="1"/>
</dbReference>
<dbReference type="InterPro" id="IPR005144">
    <property type="entry name" value="ATP-cone_dom"/>
</dbReference>
<dbReference type="InterPro" id="IPR055173">
    <property type="entry name" value="NrdR-like_N"/>
</dbReference>
<dbReference type="InterPro" id="IPR003796">
    <property type="entry name" value="RNR_NrdR-like"/>
</dbReference>
<dbReference type="NCBIfam" id="TIGR00244">
    <property type="entry name" value="transcriptional regulator NrdR"/>
    <property type="match status" value="1"/>
</dbReference>
<dbReference type="PANTHER" id="PTHR30455">
    <property type="entry name" value="TRANSCRIPTIONAL REPRESSOR NRDR"/>
    <property type="match status" value="1"/>
</dbReference>
<dbReference type="PANTHER" id="PTHR30455:SF2">
    <property type="entry name" value="TRANSCRIPTIONAL REPRESSOR NRDR"/>
    <property type="match status" value="1"/>
</dbReference>
<dbReference type="Pfam" id="PF03477">
    <property type="entry name" value="ATP-cone"/>
    <property type="match status" value="1"/>
</dbReference>
<dbReference type="Pfam" id="PF22811">
    <property type="entry name" value="Zn_ribbon_NrdR"/>
    <property type="match status" value="1"/>
</dbReference>
<dbReference type="PROSITE" id="PS51161">
    <property type="entry name" value="ATP_CONE"/>
    <property type="match status" value="1"/>
</dbReference>
<geneLocation type="plasmid">
    <name>pHmuk01</name>
</geneLocation>
<comment type="function">
    <text evidence="1">Negatively regulates transcription of bacterial ribonucleotide reductase nrd genes and operons by binding to NrdR-boxes.</text>
</comment>
<comment type="cofactor">
    <cofactor evidence="1">
        <name>Zn(2+)</name>
        <dbReference type="ChEBI" id="CHEBI:29105"/>
    </cofactor>
    <text evidence="1">Binds 1 zinc ion.</text>
</comment>
<comment type="similarity">
    <text evidence="2">Belongs to the NrdR family.</text>
</comment>
<reference key="1">
    <citation type="journal article" date="2009" name="Stand. Genomic Sci.">
        <title>Complete genome sequence of Halomicrobium mukohataei type strain (arg-2).</title>
        <authorList>
            <person name="Tindall B.J."/>
            <person name="Schneider S."/>
            <person name="Lapidus A."/>
            <person name="Copeland A."/>
            <person name="Glavina Del Rio T."/>
            <person name="Nolan M."/>
            <person name="Lucas S."/>
            <person name="Chen F."/>
            <person name="Tice H."/>
            <person name="Cheng J.F."/>
            <person name="Saunders E."/>
            <person name="Bruce D."/>
            <person name="Goodwin L."/>
            <person name="Pitluck S."/>
            <person name="Mikhailova N."/>
            <person name="Pati A."/>
            <person name="Ivanova N."/>
            <person name="Mavrommatis K."/>
            <person name="Chen A."/>
            <person name="Palaniappan K."/>
            <person name="Chain P."/>
            <person name="Land M."/>
            <person name="Hauser L."/>
            <person name="Chang Y.J."/>
            <person name="Jeffries C.D."/>
            <person name="Brettin T."/>
            <person name="Han C."/>
            <person name="Rohde M."/>
            <person name="Goker M."/>
            <person name="Bristow J."/>
            <person name="Eisen J.A."/>
            <person name="Markowitz V."/>
            <person name="Hugenholtz P."/>
            <person name="Klenk H.P."/>
            <person name="Kyrpides N.C."/>
            <person name="Detter J.C."/>
        </authorList>
    </citation>
    <scope>NUCLEOTIDE SEQUENCE [LARGE SCALE GENOMIC DNA]</scope>
    <source>
        <strain>ATCC 700874 / DSM 12286 / JCM 9738 / NCIMB 13541</strain>
    </source>
</reference>
<feature type="chain" id="PRO_0000399920" description="Transcriptional repressor NrdR">
    <location>
        <begin position="1"/>
        <end position="162"/>
    </location>
</feature>
<feature type="domain" description="ATP-cone">
    <location>
        <begin position="49"/>
        <end position="139"/>
    </location>
</feature>
<feature type="zinc finger region" evidence="1">
    <location>
        <begin position="3"/>
        <end position="34"/>
    </location>
</feature>
<protein>
    <recommendedName>
        <fullName>Transcriptional repressor NrdR</fullName>
    </recommendedName>
</protein>
<sequence length="162" mass="18570">MNCPDCGNERTRVIDTETSADGTSVRRRRECQRCSFRFTTYERPEWESLQVKKRDGTIESFDRQKLRAGIERAVEKRDVTETTVTALVDDVESELQGREARIVSSSLIGELVSESLRTLDKVAYIRFVSVYKAFSEPQEFLRELDAVLDAELDDFEASNSSQ</sequence>
<gene>
    <name type="primary">nrdR</name>
    <name type="ordered locus">Hmuk_3351</name>
</gene>
<keyword id="KW-0067">ATP-binding</keyword>
<keyword id="KW-0238">DNA-binding</keyword>
<keyword id="KW-0479">Metal-binding</keyword>
<keyword id="KW-0547">Nucleotide-binding</keyword>
<keyword id="KW-0614">Plasmid</keyword>
<keyword id="KW-1185">Reference proteome</keyword>
<keyword id="KW-0678">Repressor</keyword>
<keyword id="KW-0804">Transcription</keyword>
<keyword id="KW-0805">Transcription regulation</keyword>
<keyword id="KW-0862">Zinc</keyword>
<keyword id="KW-0863">Zinc-finger</keyword>
<name>NRDR_HALMD</name>
<proteinExistence type="inferred from homology"/>
<evidence type="ECO:0000250" key="1"/>
<evidence type="ECO:0000305" key="2"/>